<protein>
    <recommendedName>
        <fullName evidence="1">ATP phosphoribosyltransferase regulatory subunit</fullName>
    </recommendedName>
</protein>
<organism>
    <name type="scientific">Desulfitobacterium hafniense (strain DSM 10664 / DCB-2)</name>
    <dbReference type="NCBI Taxonomy" id="272564"/>
    <lineage>
        <taxon>Bacteria</taxon>
        <taxon>Bacillati</taxon>
        <taxon>Bacillota</taxon>
        <taxon>Clostridia</taxon>
        <taxon>Eubacteriales</taxon>
        <taxon>Desulfitobacteriaceae</taxon>
        <taxon>Desulfitobacterium</taxon>
    </lineage>
</organism>
<dbReference type="EMBL" id="CP001336">
    <property type="protein sequence ID" value="ACL19541.1"/>
    <property type="molecule type" value="Genomic_DNA"/>
</dbReference>
<dbReference type="RefSeq" id="WP_015943468.1">
    <property type="nucleotide sequence ID" value="NC_011830.1"/>
</dbReference>
<dbReference type="SMR" id="B8FP16"/>
<dbReference type="KEGG" id="dhd:Dhaf_1489"/>
<dbReference type="HOGENOM" id="CLU_025113_0_0_9"/>
<dbReference type="UniPathway" id="UPA00031">
    <property type="reaction ID" value="UER00006"/>
</dbReference>
<dbReference type="Proteomes" id="UP000007726">
    <property type="component" value="Chromosome"/>
</dbReference>
<dbReference type="GO" id="GO:0005737">
    <property type="term" value="C:cytoplasm"/>
    <property type="evidence" value="ECO:0007669"/>
    <property type="project" value="UniProtKB-SubCell"/>
</dbReference>
<dbReference type="GO" id="GO:0140096">
    <property type="term" value="F:catalytic activity, acting on a protein"/>
    <property type="evidence" value="ECO:0007669"/>
    <property type="project" value="UniProtKB-ARBA"/>
</dbReference>
<dbReference type="GO" id="GO:0004821">
    <property type="term" value="F:histidine-tRNA ligase activity"/>
    <property type="evidence" value="ECO:0007669"/>
    <property type="project" value="TreeGrafter"/>
</dbReference>
<dbReference type="GO" id="GO:0016740">
    <property type="term" value="F:transferase activity"/>
    <property type="evidence" value="ECO:0007669"/>
    <property type="project" value="UniProtKB-ARBA"/>
</dbReference>
<dbReference type="GO" id="GO:0006427">
    <property type="term" value="P:histidyl-tRNA aminoacylation"/>
    <property type="evidence" value="ECO:0007669"/>
    <property type="project" value="TreeGrafter"/>
</dbReference>
<dbReference type="GO" id="GO:0000105">
    <property type="term" value="P:L-histidine biosynthetic process"/>
    <property type="evidence" value="ECO:0007669"/>
    <property type="project" value="UniProtKB-UniRule"/>
</dbReference>
<dbReference type="CDD" id="cd00773">
    <property type="entry name" value="HisRS-like_core"/>
    <property type="match status" value="1"/>
</dbReference>
<dbReference type="Gene3D" id="3.30.930.10">
    <property type="entry name" value="Bira Bifunctional Protein, Domain 2"/>
    <property type="match status" value="1"/>
</dbReference>
<dbReference type="HAMAP" id="MF_00125">
    <property type="entry name" value="HisZ"/>
    <property type="match status" value="1"/>
</dbReference>
<dbReference type="InterPro" id="IPR006195">
    <property type="entry name" value="aa-tRNA-synth_II"/>
</dbReference>
<dbReference type="InterPro" id="IPR045864">
    <property type="entry name" value="aa-tRNA-synth_II/BPL/LPL"/>
</dbReference>
<dbReference type="InterPro" id="IPR041715">
    <property type="entry name" value="HisRS-like_core"/>
</dbReference>
<dbReference type="InterPro" id="IPR004516">
    <property type="entry name" value="HisRS/HisZ"/>
</dbReference>
<dbReference type="InterPro" id="IPR004517">
    <property type="entry name" value="HisZ"/>
</dbReference>
<dbReference type="NCBIfam" id="TIGR00443">
    <property type="entry name" value="hisZ_biosyn_reg"/>
    <property type="match status" value="1"/>
</dbReference>
<dbReference type="PANTHER" id="PTHR43707:SF1">
    <property type="entry name" value="HISTIDINE--TRNA LIGASE, MITOCHONDRIAL-RELATED"/>
    <property type="match status" value="1"/>
</dbReference>
<dbReference type="PANTHER" id="PTHR43707">
    <property type="entry name" value="HISTIDYL-TRNA SYNTHETASE"/>
    <property type="match status" value="1"/>
</dbReference>
<dbReference type="Pfam" id="PF13393">
    <property type="entry name" value="tRNA-synt_His"/>
    <property type="match status" value="1"/>
</dbReference>
<dbReference type="PIRSF" id="PIRSF001549">
    <property type="entry name" value="His-tRNA_synth"/>
    <property type="match status" value="1"/>
</dbReference>
<dbReference type="SUPFAM" id="SSF55681">
    <property type="entry name" value="Class II aaRS and biotin synthetases"/>
    <property type="match status" value="1"/>
</dbReference>
<dbReference type="PROSITE" id="PS50862">
    <property type="entry name" value="AA_TRNA_LIGASE_II"/>
    <property type="match status" value="1"/>
</dbReference>
<reference key="1">
    <citation type="journal article" date="2012" name="BMC Microbiol.">
        <title>Genome sequence of Desulfitobacterium hafniense DCB-2, a Gram-positive anaerobe capable of dehalogenation and metal reduction.</title>
        <authorList>
            <person name="Kim S.H."/>
            <person name="Harzman C."/>
            <person name="Davis J.K."/>
            <person name="Hutcheson R."/>
            <person name="Broderick J.B."/>
            <person name="Marsh T.L."/>
            <person name="Tiedje J.M."/>
        </authorList>
    </citation>
    <scope>NUCLEOTIDE SEQUENCE [LARGE SCALE GENOMIC DNA]</scope>
    <source>
        <strain>DSM 10664 / DCB-2</strain>
    </source>
</reference>
<evidence type="ECO:0000255" key="1">
    <source>
        <dbReference type="HAMAP-Rule" id="MF_00125"/>
    </source>
</evidence>
<gene>
    <name evidence="1" type="primary">hisZ</name>
    <name type="ordered locus">Dhaf_1489</name>
</gene>
<sequence>MLRSSLGLRIPEGMHDLLPDELALQERAEASALDLFKAWAYQKVVTPTLEYGACIQPVEEEEDSFFKLFDRQGHVLVLRPELTTPIARMVSTRMRGTTFPLRLCYAADVFRYSKSHKQEFRQVGVELIGSASPAADAEVVALAIEALRQIGGMDFQINLGHMGIFTGIMAELGVPQEFQLHYQEKLARKDFVGIERLVKDYGFELKVQDVLLKLPHLHGQEDMLDQVLEWSRRPSLLEAVAALRQVYRYLKDFGVQDYVSLDLGILRGFSYYTGAVFEGYVPGVGFPVVEGGRYDALYGEFGEDVPATGFAINLKAIIEQMACSNAESPEVFVCGSDVSQVIAEARKLRQTGKRVEMCLEPLTREQAVASADRKGIKEIVCVR</sequence>
<name>HISZ_DESHD</name>
<feature type="chain" id="PRO_1000122668" description="ATP phosphoribosyltransferase regulatory subunit">
    <location>
        <begin position="1"/>
        <end position="383"/>
    </location>
</feature>
<comment type="function">
    <text evidence="1">Required for the first step of histidine biosynthesis. May allow the feedback regulation of ATP phosphoribosyltransferase activity by histidine.</text>
</comment>
<comment type="pathway">
    <text evidence="1">Amino-acid biosynthesis; L-histidine biosynthesis; L-histidine from 5-phospho-alpha-D-ribose 1-diphosphate: step 1/9.</text>
</comment>
<comment type="subunit">
    <text evidence="1">Heteromultimer composed of HisG and HisZ subunits.</text>
</comment>
<comment type="subcellular location">
    <subcellularLocation>
        <location evidence="1">Cytoplasm</location>
    </subcellularLocation>
</comment>
<comment type="miscellaneous">
    <text>This function is generally fulfilled by the C-terminal part of HisG, which is missing in some bacteria such as this one.</text>
</comment>
<comment type="similarity">
    <text evidence="1">Belongs to the class-II aminoacyl-tRNA synthetase family. HisZ subfamily.</text>
</comment>
<keyword id="KW-0028">Amino-acid biosynthesis</keyword>
<keyword id="KW-0963">Cytoplasm</keyword>
<keyword id="KW-0368">Histidine biosynthesis</keyword>
<proteinExistence type="inferred from homology"/>
<accession>B8FP16</accession>